<reference key="1">
    <citation type="journal article" date="2006" name="PLoS Genet.">
        <title>The complete genome sequence and comparative genome analysis of the high pathogenicity Yersinia enterocolitica strain 8081.</title>
        <authorList>
            <person name="Thomson N.R."/>
            <person name="Howard S."/>
            <person name="Wren B.W."/>
            <person name="Holden M.T.G."/>
            <person name="Crossman L."/>
            <person name="Challis G.L."/>
            <person name="Churcher C."/>
            <person name="Mungall K."/>
            <person name="Brooks K."/>
            <person name="Chillingworth T."/>
            <person name="Feltwell T."/>
            <person name="Abdellah Z."/>
            <person name="Hauser H."/>
            <person name="Jagels K."/>
            <person name="Maddison M."/>
            <person name="Moule S."/>
            <person name="Sanders M."/>
            <person name="Whitehead S."/>
            <person name="Quail M.A."/>
            <person name="Dougan G."/>
            <person name="Parkhill J."/>
            <person name="Prentice M.B."/>
        </authorList>
    </citation>
    <scope>NUCLEOTIDE SEQUENCE [LARGE SCALE GENOMIC DNA]</scope>
    <source>
        <strain>NCTC 13174 / 8081</strain>
    </source>
</reference>
<dbReference type="EC" id="2.7.7.8" evidence="1"/>
<dbReference type="EMBL" id="AM286415">
    <property type="protein sequence ID" value="CAL10564.1"/>
    <property type="molecule type" value="Genomic_DNA"/>
</dbReference>
<dbReference type="RefSeq" id="WP_005156266.1">
    <property type="nucleotide sequence ID" value="NC_008800.1"/>
</dbReference>
<dbReference type="RefSeq" id="YP_001004808.1">
    <property type="nucleotide sequence ID" value="NC_008800.1"/>
</dbReference>
<dbReference type="SMR" id="A1JIX3"/>
<dbReference type="GeneID" id="93968919"/>
<dbReference type="KEGG" id="yen:YE0438"/>
<dbReference type="PATRIC" id="fig|393305.7.peg.534"/>
<dbReference type="eggNOG" id="COG1185">
    <property type="taxonomic scope" value="Bacteria"/>
</dbReference>
<dbReference type="HOGENOM" id="CLU_004217_2_2_6"/>
<dbReference type="OrthoDB" id="9804305at2"/>
<dbReference type="Proteomes" id="UP000000642">
    <property type="component" value="Chromosome"/>
</dbReference>
<dbReference type="GO" id="GO:0005829">
    <property type="term" value="C:cytosol"/>
    <property type="evidence" value="ECO:0007669"/>
    <property type="project" value="TreeGrafter"/>
</dbReference>
<dbReference type="GO" id="GO:0000175">
    <property type="term" value="F:3'-5'-RNA exonuclease activity"/>
    <property type="evidence" value="ECO:0007669"/>
    <property type="project" value="TreeGrafter"/>
</dbReference>
<dbReference type="GO" id="GO:0000287">
    <property type="term" value="F:magnesium ion binding"/>
    <property type="evidence" value="ECO:0007669"/>
    <property type="project" value="UniProtKB-UniRule"/>
</dbReference>
<dbReference type="GO" id="GO:0004654">
    <property type="term" value="F:polyribonucleotide nucleotidyltransferase activity"/>
    <property type="evidence" value="ECO:0007669"/>
    <property type="project" value="UniProtKB-UniRule"/>
</dbReference>
<dbReference type="GO" id="GO:0003723">
    <property type="term" value="F:RNA binding"/>
    <property type="evidence" value="ECO:0007669"/>
    <property type="project" value="UniProtKB-UniRule"/>
</dbReference>
<dbReference type="GO" id="GO:0006402">
    <property type="term" value="P:mRNA catabolic process"/>
    <property type="evidence" value="ECO:0007669"/>
    <property type="project" value="UniProtKB-UniRule"/>
</dbReference>
<dbReference type="GO" id="GO:0006396">
    <property type="term" value="P:RNA processing"/>
    <property type="evidence" value="ECO:0007669"/>
    <property type="project" value="InterPro"/>
</dbReference>
<dbReference type="CDD" id="cd02393">
    <property type="entry name" value="KH-I_PNPase"/>
    <property type="match status" value="1"/>
</dbReference>
<dbReference type="CDD" id="cd11363">
    <property type="entry name" value="RNase_PH_PNPase_1"/>
    <property type="match status" value="1"/>
</dbReference>
<dbReference type="CDD" id="cd11364">
    <property type="entry name" value="RNase_PH_PNPase_2"/>
    <property type="match status" value="1"/>
</dbReference>
<dbReference type="CDD" id="cd04472">
    <property type="entry name" value="S1_PNPase"/>
    <property type="match status" value="1"/>
</dbReference>
<dbReference type="FunFam" id="2.40.50.140:FF:000023">
    <property type="entry name" value="Polyribonucleotide nucleotidyltransferase"/>
    <property type="match status" value="1"/>
</dbReference>
<dbReference type="FunFam" id="3.30.1370.10:FF:000001">
    <property type="entry name" value="Polyribonucleotide nucleotidyltransferase"/>
    <property type="match status" value="1"/>
</dbReference>
<dbReference type="FunFam" id="3.30.230.70:FF:000001">
    <property type="entry name" value="Polyribonucleotide nucleotidyltransferase"/>
    <property type="match status" value="1"/>
</dbReference>
<dbReference type="FunFam" id="3.30.230.70:FF:000002">
    <property type="entry name" value="Polyribonucleotide nucleotidyltransferase"/>
    <property type="match status" value="1"/>
</dbReference>
<dbReference type="Gene3D" id="3.30.230.70">
    <property type="entry name" value="GHMP Kinase, N-terminal domain"/>
    <property type="match status" value="2"/>
</dbReference>
<dbReference type="Gene3D" id="3.30.1370.10">
    <property type="entry name" value="K Homology domain, type 1"/>
    <property type="match status" value="1"/>
</dbReference>
<dbReference type="Gene3D" id="2.40.50.140">
    <property type="entry name" value="Nucleic acid-binding proteins"/>
    <property type="match status" value="1"/>
</dbReference>
<dbReference type="HAMAP" id="MF_01595">
    <property type="entry name" value="PNPase"/>
    <property type="match status" value="1"/>
</dbReference>
<dbReference type="InterPro" id="IPR001247">
    <property type="entry name" value="ExoRNase_PH_dom1"/>
</dbReference>
<dbReference type="InterPro" id="IPR015847">
    <property type="entry name" value="ExoRNase_PH_dom2"/>
</dbReference>
<dbReference type="InterPro" id="IPR036345">
    <property type="entry name" value="ExoRNase_PH_dom2_sf"/>
</dbReference>
<dbReference type="InterPro" id="IPR004087">
    <property type="entry name" value="KH_dom"/>
</dbReference>
<dbReference type="InterPro" id="IPR004088">
    <property type="entry name" value="KH_dom_type_1"/>
</dbReference>
<dbReference type="InterPro" id="IPR036612">
    <property type="entry name" value="KH_dom_type_1_sf"/>
</dbReference>
<dbReference type="InterPro" id="IPR012340">
    <property type="entry name" value="NA-bd_OB-fold"/>
</dbReference>
<dbReference type="InterPro" id="IPR012162">
    <property type="entry name" value="PNPase"/>
</dbReference>
<dbReference type="InterPro" id="IPR027408">
    <property type="entry name" value="PNPase/RNase_PH_dom_sf"/>
</dbReference>
<dbReference type="InterPro" id="IPR015848">
    <property type="entry name" value="PNPase_PH_RNA-bd_bac/org-type"/>
</dbReference>
<dbReference type="InterPro" id="IPR036456">
    <property type="entry name" value="PNPase_PH_RNA-bd_sf"/>
</dbReference>
<dbReference type="InterPro" id="IPR020568">
    <property type="entry name" value="Ribosomal_Su5_D2-typ_SF"/>
</dbReference>
<dbReference type="InterPro" id="IPR003029">
    <property type="entry name" value="S1_domain"/>
</dbReference>
<dbReference type="NCBIfam" id="TIGR03591">
    <property type="entry name" value="polynuc_phos"/>
    <property type="match status" value="1"/>
</dbReference>
<dbReference type="NCBIfam" id="NF008805">
    <property type="entry name" value="PRK11824.1"/>
    <property type="match status" value="1"/>
</dbReference>
<dbReference type="PANTHER" id="PTHR11252">
    <property type="entry name" value="POLYRIBONUCLEOTIDE NUCLEOTIDYLTRANSFERASE"/>
    <property type="match status" value="1"/>
</dbReference>
<dbReference type="PANTHER" id="PTHR11252:SF0">
    <property type="entry name" value="POLYRIBONUCLEOTIDE NUCLEOTIDYLTRANSFERASE 1, MITOCHONDRIAL"/>
    <property type="match status" value="1"/>
</dbReference>
<dbReference type="Pfam" id="PF00013">
    <property type="entry name" value="KH_1"/>
    <property type="match status" value="1"/>
</dbReference>
<dbReference type="Pfam" id="PF03726">
    <property type="entry name" value="PNPase"/>
    <property type="match status" value="1"/>
</dbReference>
<dbReference type="Pfam" id="PF01138">
    <property type="entry name" value="RNase_PH"/>
    <property type="match status" value="2"/>
</dbReference>
<dbReference type="Pfam" id="PF03725">
    <property type="entry name" value="RNase_PH_C"/>
    <property type="match status" value="2"/>
</dbReference>
<dbReference type="Pfam" id="PF00575">
    <property type="entry name" value="S1"/>
    <property type="match status" value="1"/>
</dbReference>
<dbReference type="PIRSF" id="PIRSF005499">
    <property type="entry name" value="PNPase"/>
    <property type="match status" value="1"/>
</dbReference>
<dbReference type="SMART" id="SM00322">
    <property type="entry name" value="KH"/>
    <property type="match status" value="1"/>
</dbReference>
<dbReference type="SMART" id="SM00316">
    <property type="entry name" value="S1"/>
    <property type="match status" value="1"/>
</dbReference>
<dbReference type="SUPFAM" id="SSF54791">
    <property type="entry name" value="Eukaryotic type KH-domain (KH-domain type I)"/>
    <property type="match status" value="1"/>
</dbReference>
<dbReference type="SUPFAM" id="SSF50249">
    <property type="entry name" value="Nucleic acid-binding proteins"/>
    <property type="match status" value="1"/>
</dbReference>
<dbReference type="SUPFAM" id="SSF46915">
    <property type="entry name" value="Polynucleotide phosphorylase/guanosine pentaphosphate synthase (PNPase/GPSI), domain 3"/>
    <property type="match status" value="1"/>
</dbReference>
<dbReference type="SUPFAM" id="SSF55666">
    <property type="entry name" value="Ribonuclease PH domain 2-like"/>
    <property type="match status" value="2"/>
</dbReference>
<dbReference type="SUPFAM" id="SSF54211">
    <property type="entry name" value="Ribosomal protein S5 domain 2-like"/>
    <property type="match status" value="2"/>
</dbReference>
<dbReference type="PROSITE" id="PS50084">
    <property type="entry name" value="KH_TYPE_1"/>
    <property type="match status" value="1"/>
</dbReference>
<dbReference type="PROSITE" id="PS50126">
    <property type="entry name" value="S1"/>
    <property type="match status" value="1"/>
</dbReference>
<organism>
    <name type="scientific">Yersinia enterocolitica serotype O:8 / biotype 1B (strain NCTC 13174 / 8081)</name>
    <dbReference type="NCBI Taxonomy" id="393305"/>
    <lineage>
        <taxon>Bacteria</taxon>
        <taxon>Pseudomonadati</taxon>
        <taxon>Pseudomonadota</taxon>
        <taxon>Gammaproteobacteria</taxon>
        <taxon>Enterobacterales</taxon>
        <taxon>Yersiniaceae</taxon>
        <taxon>Yersinia</taxon>
    </lineage>
</organism>
<protein>
    <recommendedName>
        <fullName evidence="1">Polyribonucleotide nucleotidyltransferase</fullName>
        <ecNumber evidence="1">2.7.7.8</ecNumber>
    </recommendedName>
    <alternativeName>
        <fullName evidence="1">Polynucleotide phosphorylase</fullName>
        <shortName evidence="1">PNPase</shortName>
    </alternativeName>
</protein>
<proteinExistence type="inferred from homology"/>
<keyword id="KW-0963">Cytoplasm</keyword>
<keyword id="KW-0460">Magnesium</keyword>
<keyword id="KW-0479">Metal-binding</keyword>
<keyword id="KW-0548">Nucleotidyltransferase</keyword>
<keyword id="KW-0694">RNA-binding</keyword>
<keyword id="KW-0808">Transferase</keyword>
<name>PNP_YERE8</name>
<feature type="chain" id="PRO_0000329946" description="Polyribonucleotide nucleotidyltransferase">
    <location>
        <begin position="1"/>
        <end position="706"/>
    </location>
</feature>
<feature type="domain" description="KH" evidence="1">
    <location>
        <begin position="553"/>
        <end position="612"/>
    </location>
</feature>
<feature type="domain" description="S1 motif" evidence="1">
    <location>
        <begin position="622"/>
        <end position="690"/>
    </location>
</feature>
<feature type="binding site" evidence="1">
    <location>
        <position position="486"/>
    </location>
    <ligand>
        <name>Mg(2+)</name>
        <dbReference type="ChEBI" id="CHEBI:18420"/>
    </ligand>
</feature>
<feature type="binding site" evidence="1">
    <location>
        <position position="492"/>
    </location>
    <ligand>
        <name>Mg(2+)</name>
        <dbReference type="ChEBI" id="CHEBI:18420"/>
    </ligand>
</feature>
<gene>
    <name evidence="1" type="primary">pnp</name>
    <name type="ordered locus">YE0438</name>
</gene>
<evidence type="ECO:0000255" key="1">
    <source>
        <dbReference type="HAMAP-Rule" id="MF_01595"/>
    </source>
</evidence>
<comment type="function">
    <text evidence="1">Involved in mRNA degradation. Catalyzes the phosphorolysis of single-stranded polyribonucleotides processively in the 3'- to 5'-direction.</text>
</comment>
<comment type="catalytic activity">
    <reaction evidence="1">
        <text>RNA(n+1) + phosphate = RNA(n) + a ribonucleoside 5'-diphosphate</text>
        <dbReference type="Rhea" id="RHEA:22096"/>
        <dbReference type="Rhea" id="RHEA-COMP:14527"/>
        <dbReference type="Rhea" id="RHEA-COMP:17342"/>
        <dbReference type="ChEBI" id="CHEBI:43474"/>
        <dbReference type="ChEBI" id="CHEBI:57930"/>
        <dbReference type="ChEBI" id="CHEBI:140395"/>
        <dbReference type="EC" id="2.7.7.8"/>
    </reaction>
</comment>
<comment type="cofactor">
    <cofactor evidence="1">
        <name>Mg(2+)</name>
        <dbReference type="ChEBI" id="CHEBI:18420"/>
    </cofactor>
</comment>
<comment type="subunit">
    <text evidence="1">Component of the RNA degradosome, which is a multiprotein complex involved in RNA processing and mRNA degradation.</text>
</comment>
<comment type="subcellular location">
    <subcellularLocation>
        <location evidence="1">Cytoplasm</location>
    </subcellularLocation>
</comment>
<comment type="similarity">
    <text evidence="1">Belongs to the polyribonucleotide nucleotidyltransferase family.</text>
</comment>
<sequence>MLTPIIRKFQYGQHTVTIETGMMARQATAAVMVSMDDTAVFVTVVGQKKAKPGQSFFPLTVNYQERTYAAGRIPGSFFRREGRPSEGETLTSRLIDRPIRPLFPDSFLNEVQVIATVVSVNPQINPDIVALIGASAALSLSGIPFNGPIGAARVGFINDQYVLNPTTDELKESRLDLVVAGTAGAVLMVESEADILSEDQMLGAVVFGHEQQQVVIENINALVAEAGKPKWDWHAEPVNEALHARVAELAAARLGDAYRITEKQERYTQVDAIKADVTEALLAQDDTLDAAEIQDILGSVEKDVVRSRVLRGEPRIDGREKDMIRGLDVRTGVLPRTHGSALFTRGETQALVTATLGTARDAQNIDELMGERTDSFLLHYNFPPYSVGETGMVGSPKRREIGHGRLAKRGVLAVMPSPSEFPYTVRVVSEITESNGSSSMASVCGASLALMDAGVPIKAAVAGIAMGLVKEDENFVVLSDILGDEDHLGDMDFKVAGSRDGITALQMDIKIEGITREIMQVALNQAKGARLHILGVMEQAISTPRGDISEFAPRIYTMKINPEKIKDVIGKGGSVIRALTDETGTTIEIEDDGTIKIAATDGDKAKHAIRRIEEITAEIEVNRIYAGKVTRIVDFGAFVAIGGGKEGLVHISQIADKRVDKVTDYLQMGQEVPVKVIEVDRQGRIRLSMKEATTPDAEAPAPEAAE</sequence>
<accession>A1JIX3</accession>